<organism>
    <name type="scientific">Homo sapiens</name>
    <name type="common">Human</name>
    <dbReference type="NCBI Taxonomy" id="9606"/>
    <lineage>
        <taxon>Eukaryota</taxon>
        <taxon>Metazoa</taxon>
        <taxon>Chordata</taxon>
        <taxon>Craniata</taxon>
        <taxon>Vertebrata</taxon>
        <taxon>Euteleostomi</taxon>
        <taxon>Mammalia</taxon>
        <taxon>Eutheria</taxon>
        <taxon>Euarchontoglires</taxon>
        <taxon>Primates</taxon>
        <taxon>Haplorrhini</taxon>
        <taxon>Catarrhini</taxon>
        <taxon>Hominidae</taxon>
        <taxon>Homo</taxon>
    </lineage>
</organism>
<gene>
    <name type="primary">NPIPB8</name>
</gene>
<proteinExistence type="inferred from homology"/>
<sequence>MVKLSIVLTPQFLSHDQGQLTKELQQHVKSVTCPCEYLRKVINSLAVYRHRETDFGVGVRDHPGQHGKTPSPQKLDNLIIIIIGFLRCYTFNILFCTSCLCVSFLKTIFWSRNGHDGSMDVQQRAWRSNRSRQKGLRSICMHTKKRVSSFRGNKIGLKDVITLRRHVETKVRAKIRKRKVTTKINRHDKINGKRKTARKQKMFQRAQELRRRAEDYHKCKIPPSARKPLCNWVRMAAAEHRHSSGLPYWLYLTAETLKNRMGRQPPPPTQQHSITDNSLSLKTPPECLLTPLPPSVDDNIKECPLAPLPPSPLPPSVDDNLKECLFVPLPPSPLPPSVDDNLKECLFVPLPPSPLPPSVDDNLKTPPLATQEAEVEKPPKPKRWRVDEVEQSPKPKRQREAEAQQLPKPKRRRLSKLRTRHCTQAWAIRINP</sequence>
<accession>E9PQR5</accession>
<evidence type="ECO:0000256" key="1">
    <source>
        <dbReference type="SAM" id="MobiDB-lite"/>
    </source>
</evidence>
<evidence type="ECO:0000305" key="2"/>
<protein>
    <recommendedName>
        <fullName>Nuclear pore complex-interacting protein family member B8</fullName>
    </recommendedName>
</protein>
<feature type="chain" id="PRO_0000423922" description="Nuclear pore complex-interacting protein family member B8">
    <location>
        <begin position="1"/>
        <end position="432"/>
    </location>
</feature>
<feature type="region of interest" description="Disordered" evidence="1">
    <location>
        <begin position="260"/>
        <end position="280"/>
    </location>
</feature>
<feature type="region of interest" description="Disordered" evidence="1">
    <location>
        <begin position="353"/>
        <end position="420"/>
    </location>
</feature>
<feature type="compositionally biased region" description="Polar residues" evidence="1">
    <location>
        <begin position="270"/>
        <end position="280"/>
    </location>
</feature>
<feature type="compositionally biased region" description="Basic and acidic residues" evidence="1">
    <location>
        <begin position="374"/>
        <end position="402"/>
    </location>
</feature>
<feature type="compositionally biased region" description="Basic residues" evidence="1">
    <location>
        <begin position="408"/>
        <end position="420"/>
    </location>
</feature>
<name>NPIB8_HUMAN</name>
<comment type="similarity">
    <text evidence="2">Belongs to the NPIP family.</text>
</comment>
<reference key="1">
    <citation type="journal article" date="2004" name="Nature">
        <title>The sequence and analysis of duplication-rich human chromosome 16.</title>
        <authorList>
            <person name="Martin J."/>
            <person name="Han C."/>
            <person name="Gordon L.A."/>
            <person name="Terry A."/>
            <person name="Prabhakar S."/>
            <person name="She X."/>
            <person name="Xie G."/>
            <person name="Hellsten U."/>
            <person name="Chan Y.M."/>
            <person name="Altherr M."/>
            <person name="Couronne O."/>
            <person name="Aerts A."/>
            <person name="Bajorek E."/>
            <person name="Black S."/>
            <person name="Blumer H."/>
            <person name="Branscomb E."/>
            <person name="Brown N.C."/>
            <person name="Bruno W.J."/>
            <person name="Buckingham J.M."/>
            <person name="Callen D.F."/>
            <person name="Campbell C.S."/>
            <person name="Campbell M.L."/>
            <person name="Campbell E.W."/>
            <person name="Caoile C."/>
            <person name="Challacombe J.F."/>
            <person name="Chasteen L.A."/>
            <person name="Chertkov O."/>
            <person name="Chi H.C."/>
            <person name="Christensen M."/>
            <person name="Clark L.M."/>
            <person name="Cohn J.D."/>
            <person name="Denys M."/>
            <person name="Detter J.C."/>
            <person name="Dickson M."/>
            <person name="Dimitrijevic-Bussod M."/>
            <person name="Escobar J."/>
            <person name="Fawcett J.J."/>
            <person name="Flowers D."/>
            <person name="Fotopulos D."/>
            <person name="Glavina T."/>
            <person name="Gomez M."/>
            <person name="Gonzales E."/>
            <person name="Goodstein D."/>
            <person name="Goodwin L.A."/>
            <person name="Grady D.L."/>
            <person name="Grigoriev I."/>
            <person name="Groza M."/>
            <person name="Hammon N."/>
            <person name="Hawkins T."/>
            <person name="Haydu L."/>
            <person name="Hildebrand C.E."/>
            <person name="Huang W."/>
            <person name="Israni S."/>
            <person name="Jett J."/>
            <person name="Jewett P.B."/>
            <person name="Kadner K."/>
            <person name="Kimball H."/>
            <person name="Kobayashi A."/>
            <person name="Krawczyk M.-C."/>
            <person name="Leyba T."/>
            <person name="Longmire J.L."/>
            <person name="Lopez F."/>
            <person name="Lou Y."/>
            <person name="Lowry S."/>
            <person name="Ludeman T."/>
            <person name="Manohar C.F."/>
            <person name="Mark G.A."/>
            <person name="McMurray K.L."/>
            <person name="Meincke L.J."/>
            <person name="Morgan J."/>
            <person name="Moyzis R.K."/>
            <person name="Mundt M.O."/>
            <person name="Munk A.C."/>
            <person name="Nandkeshwar R.D."/>
            <person name="Pitluck S."/>
            <person name="Pollard M."/>
            <person name="Predki P."/>
            <person name="Parson-Quintana B."/>
            <person name="Ramirez L."/>
            <person name="Rash S."/>
            <person name="Retterer J."/>
            <person name="Ricke D.O."/>
            <person name="Robinson D.L."/>
            <person name="Rodriguez A."/>
            <person name="Salamov A."/>
            <person name="Saunders E.H."/>
            <person name="Scott D."/>
            <person name="Shough T."/>
            <person name="Stallings R.L."/>
            <person name="Stalvey M."/>
            <person name="Sutherland R.D."/>
            <person name="Tapia R."/>
            <person name="Tesmer J.G."/>
            <person name="Thayer N."/>
            <person name="Thompson L.S."/>
            <person name="Tice H."/>
            <person name="Torney D.C."/>
            <person name="Tran-Gyamfi M."/>
            <person name="Tsai M."/>
            <person name="Ulanovsky L.E."/>
            <person name="Ustaszewska A."/>
            <person name="Vo N."/>
            <person name="White P.S."/>
            <person name="Williams A.L."/>
            <person name="Wills P.L."/>
            <person name="Wu J.-R."/>
            <person name="Wu K."/>
            <person name="Yang J."/>
            <person name="DeJong P."/>
            <person name="Bruce D."/>
            <person name="Doggett N.A."/>
            <person name="Deaven L."/>
            <person name="Schmutz J."/>
            <person name="Grimwood J."/>
            <person name="Richardson P."/>
            <person name="Rokhsar D.S."/>
            <person name="Eichler E.E."/>
            <person name="Gilna P."/>
            <person name="Lucas S.M."/>
            <person name="Myers R.M."/>
            <person name="Rubin E.M."/>
            <person name="Pennacchio L.A."/>
        </authorList>
    </citation>
    <scope>NUCLEOTIDE SEQUENCE [LARGE SCALE GENOMIC DNA]</scope>
</reference>
<keyword id="KW-1185">Reference proteome</keyword>
<dbReference type="EMBL" id="AC020765">
    <property type="status" value="NOT_ANNOTATED_CDS"/>
    <property type="molecule type" value="Genomic_DNA"/>
</dbReference>
<dbReference type="EMBL" id="AC145285">
    <property type="status" value="NOT_ANNOTATED_CDS"/>
    <property type="molecule type" value="Genomic_DNA"/>
</dbReference>
<dbReference type="CCDS" id="CCDS81963.1"/>
<dbReference type="RefSeq" id="NP_001297065.1">
    <property type="nucleotide sequence ID" value="NM_001310136.2"/>
</dbReference>
<dbReference type="RefSeq" id="NP_001372851.1">
    <property type="nucleotide sequence ID" value="NM_001385922.1"/>
</dbReference>
<dbReference type="RefSeq" id="XP_016879113.1">
    <property type="nucleotide sequence ID" value="XM_017023624.1"/>
</dbReference>
<dbReference type="SMR" id="E9PQR5"/>
<dbReference type="FunCoup" id="E9PQR5">
    <property type="interactions" value="17"/>
</dbReference>
<dbReference type="STRING" id="9606.ENSP00000434399"/>
<dbReference type="GlyGen" id="E9PQR5">
    <property type="glycosylation" value="1 site"/>
</dbReference>
<dbReference type="BioMuta" id="NPIPB8"/>
<dbReference type="MassIVE" id="E9PQR5"/>
<dbReference type="PaxDb" id="9606-ENSP00000434399"/>
<dbReference type="PeptideAtlas" id="E9PQR5"/>
<dbReference type="DNASU" id="728734"/>
<dbReference type="Ensembl" id="ENST00000529716.5">
    <property type="protein sequence ID" value="ENSP00000434399.1"/>
    <property type="gene ID" value="ENSG00000255524.8"/>
</dbReference>
<dbReference type="Ensembl" id="ENST00000683297.1">
    <property type="protein sequence ID" value="ENSP00000507410.1"/>
    <property type="gene ID" value="ENSG00000255524.8"/>
</dbReference>
<dbReference type="GeneID" id="728734"/>
<dbReference type="KEGG" id="hsa:728734"/>
<dbReference type="MANE-Select" id="ENST00000683297.1">
    <property type="protein sequence ID" value="ENSP00000507410.1"/>
    <property type="RefSeq nucleotide sequence ID" value="NM_001310136.2"/>
    <property type="RefSeq protein sequence ID" value="NP_001297065.1"/>
</dbReference>
<dbReference type="UCSC" id="uc059soj.1">
    <property type="organism name" value="human"/>
</dbReference>
<dbReference type="AGR" id="HGNC:37490"/>
<dbReference type="CTD" id="728734"/>
<dbReference type="DisGeNET" id="728734"/>
<dbReference type="GeneCards" id="NPIPB8"/>
<dbReference type="HGNC" id="HGNC:37490">
    <property type="gene designation" value="NPIPB8"/>
</dbReference>
<dbReference type="HPA" id="ENSG00000255524">
    <property type="expression patterns" value="Tissue enriched (testis)"/>
</dbReference>
<dbReference type="neXtProt" id="NX_E9PQR5"/>
<dbReference type="VEuPathDB" id="HostDB:ENSG00000255524"/>
<dbReference type="eggNOG" id="ENOG502TDBV">
    <property type="taxonomic scope" value="Eukaryota"/>
</dbReference>
<dbReference type="GeneTree" id="ENSGT00540000072033"/>
<dbReference type="HOGENOM" id="CLU_059939_0_0_1"/>
<dbReference type="InParanoid" id="E9PQR5"/>
<dbReference type="OrthoDB" id="17754at314295"/>
<dbReference type="PAN-GO" id="E9PQR5">
    <property type="GO annotations" value="1 GO annotation based on evolutionary models"/>
</dbReference>
<dbReference type="PhylomeDB" id="E9PQR5"/>
<dbReference type="TreeFam" id="TF333389"/>
<dbReference type="PathwayCommons" id="E9PQR5"/>
<dbReference type="SignaLink" id="E9PQR5"/>
<dbReference type="BioGRID-ORCS" id="728734">
    <property type="hits" value="0 hits in 37 CRISPR screens"/>
</dbReference>
<dbReference type="ChiTaRS" id="NPIPB8">
    <property type="organism name" value="human"/>
</dbReference>
<dbReference type="GenomeRNAi" id="728734"/>
<dbReference type="Pharos" id="E9PQR5">
    <property type="development level" value="Tdark"/>
</dbReference>
<dbReference type="PRO" id="PR:E9PQR5"/>
<dbReference type="Proteomes" id="UP000005640">
    <property type="component" value="Chromosome 16"/>
</dbReference>
<dbReference type="RNAct" id="E9PQR5">
    <property type="molecule type" value="protein"/>
</dbReference>
<dbReference type="Bgee" id="ENSG00000255524">
    <property type="expression patterns" value="Expressed in male germ line stem cell (sensu Vertebrata) in testis and 92 other cell types or tissues"/>
</dbReference>
<dbReference type="ExpressionAtlas" id="E9PQR5">
    <property type="expression patterns" value="baseline and differential"/>
</dbReference>
<dbReference type="InterPro" id="IPR009443">
    <property type="entry name" value="NPIP"/>
</dbReference>
<dbReference type="InterPro" id="IPR054697">
    <property type="entry name" value="NPIP_N"/>
</dbReference>
<dbReference type="PANTHER" id="PTHR15438">
    <property type="entry name" value="NUCLEAR PORE COMPLEX INTERACTING PROTEIN"/>
    <property type="match status" value="1"/>
</dbReference>
<dbReference type="PANTHER" id="PTHR15438:SF4">
    <property type="entry name" value="NUCLEAR PORE COMPLEX-INTERACTING PROTEIN FAMILY MEMBER B15-RELATED"/>
    <property type="match status" value="1"/>
</dbReference>
<dbReference type="Pfam" id="PF06409">
    <property type="entry name" value="NPIP"/>
    <property type="match status" value="1"/>
</dbReference>